<gene>
    <name type="primary">yugK</name>
    <name type="ordered locus">BSU31360</name>
</gene>
<protein>
    <recommendedName>
        <fullName>Probable NADH-dependent butanol dehydrogenase 2</fullName>
        <ecNumber>1.1.1.-</ecNumber>
    </recommendedName>
</protein>
<feature type="chain" id="PRO_0000087820" description="Probable NADH-dependent butanol dehydrogenase 2">
    <location>
        <begin position="1"/>
        <end position="390"/>
    </location>
</feature>
<keyword id="KW-0520">NAD</keyword>
<keyword id="KW-0560">Oxidoreductase</keyword>
<keyword id="KW-1185">Reference proteome</keyword>
<accession>O05240</accession>
<sequence>MENFTYYNPTKLIFGKGQLEQLRKEFKRYGKNVLLVYGGGSIKRNGLYDQVTGILKEEGAVVHELSGVEPNPRLATVEKGIGLCREHDIDFLLAVGGGSVIDCTKAIAAGVKYDGDAWDIFSKKVTAEDALPFGTVLTLAATGSEMNPDSVITNWETNEKFVWGSNVTHPRFSILDPENTFTVPENQTVYGMVDMMSHVFEQYFHNVENTPLQDRMCFAVLQTVIETAPKLLEDLENYELRETILYAGTIALNGTLQMGYFGDWASHTMEHAVSAVYDIPHAGGLAILFPNWMRYTLDTNVGRFKNLMLNMFDIDTEGKTDKEIALEGIDKLSAFWTSLGAPSRLADYNIGEEKLELIADIAAKEMEHGGFGNFQKLNKDDVLAILRASL</sequence>
<organism>
    <name type="scientific">Bacillus subtilis (strain 168)</name>
    <dbReference type="NCBI Taxonomy" id="224308"/>
    <lineage>
        <taxon>Bacteria</taxon>
        <taxon>Bacillati</taxon>
        <taxon>Bacillota</taxon>
        <taxon>Bacilli</taxon>
        <taxon>Bacillales</taxon>
        <taxon>Bacillaceae</taxon>
        <taxon>Bacillus</taxon>
    </lineage>
</organism>
<comment type="pathway">
    <text>Alcohol metabolism; butanol biosynthesis.</text>
</comment>
<comment type="similarity">
    <text evidence="1">Belongs to the iron-containing alcohol dehydrogenase family.</text>
</comment>
<proteinExistence type="inferred from homology"/>
<reference key="1">
    <citation type="journal article" date="1997" name="Microbiology">
        <title>Analysis of the Bacillus subtilis genome: cloning and nucleotide sequence of a 62 kb region between 275 degrees (rrnB) and 284 degrees (pai).</title>
        <authorList>
            <person name="Oudega B."/>
            <person name="Koningstein G."/>
            <person name="Rodrigues L."/>
            <person name="de Sales Ramon M."/>
            <person name="Hilbert H."/>
            <person name="Duesterhoeft A."/>
            <person name="Pohl T.M."/>
            <person name="Weitzenegger T."/>
        </authorList>
    </citation>
    <scope>NUCLEOTIDE SEQUENCE [GENOMIC DNA]</scope>
    <source>
        <strain>168</strain>
    </source>
</reference>
<reference key="2">
    <citation type="journal article" date="1997" name="Nature">
        <title>The complete genome sequence of the Gram-positive bacterium Bacillus subtilis.</title>
        <authorList>
            <person name="Kunst F."/>
            <person name="Ogasawara N."/>
            <person name="Moszer I."/>
            <person name="Albertini A.M."/>
            <person name="Alloni G."/>
            <person name="Azevedo V."/>
            <person name="Bertero M.G."/>
            <person name="Bessieres P."/>
            <person name="Bolotin A."/>
            <person name="Borchert S."/>
            <person name="Borriss R."/>
            <person name="Boursier L."/>
            <person name="Brans A."/>
            <person name="Braun M."/>
            <person name="Brignell S.C."/>
            <person name="Bron S."/>
            <person name="Brouillet S."/>
            <person name="Bruschi C.V."/>
            <person name="Caldwell B."/>
            <person name="Capuano V."/>
            <person name="Carter N.M."/>
            <person name="Choi S.-K."/>
            <person name="Codani J.-J."/>
            <person name="Connerton I.F."/>
            <person name="Cummings N.J."/>
            <person name="Daniel R.A."/>
            <person name="Denizot F."/>
            <person name="Devine K.M."/>
            <person name="Duesterhoeft A."/>
            <person name="Ehrlich S.D."/>
            <person name="Emmerson P.T."/>
            <person name="Entian K.-D."/>
            <person name="Errington J."/>
            <person name="Fabret C."/>
            <person name="Ferrari E."/>
            <person name="Foulger D."/>
            <person name="Fritz C."/>
            <person name="Fujita M."/>
            <person name="Fujita Y."/>
            <person name="Fuma S."/>
            <person name="Galizzi A."/>
            <person name="Galleron N."/>
            <person name="Ghim S.-Y."/>
            <person name="Glaser P."/>
            <person name="Goffeau A."/>
            <person name="Golightly E.J."/>
            <person name="Grandi G."/>
            <person name="Guiseppi G."/>
            <person name="Guy B.J."/>
            <person name="Haga K."/>
            <person name="Haiech J."/>
            <person name="Harwood C.R."/>
            <person name="Henaut A."/>
            <person name="Hilbert H."/>
            <person name="Holsappel S."/>
            <person name="Hosono S."/>
            <person name="Hullo M.-F."/>
            <person name="Itaya M."/>
            <person name="Jones L.-M."/>
            <person name="Joris B."/>
            <person name="Karamata D."/>
            <person name="Kasahara Y."/>
            <person name="Klaerr-Blanchard M."/>
            <person name="Klein C."/>
            <person name="Kobayashi Y."/>
            <person name="Koetter P."/>
            <person name="Koningstein G."/>
            <person name="Krogh S."/>
            <person name="Kumano M."/>
            <person name="Kurita K."/>
            <person name="Lapidus A."/>
            <person name="Lardinois S."/>
            <person name="Lauber J."/>
            <person name="Lazarevic V."/>
            <person name="Lee S.-M."/>
            <person name="Levine A."/>
            <person name="Liu H."/>
            <person name="Masuda S."/>
            <person name="Mauel C."/>
            <person name="Medigue C."/>
            <person name="Medina N."/>
            <person name="Mellado R.P."/>
            <person name="Mizuno M."/>
            <person name="Moestl D."/>
            <person name="Nakai S."/>
            <person name="Noback M."/>
            <person name="Noone D."/>
            <person name="O'Reilly M."/>
            <person name="Ogawa K."/>
            <person name="Ogiwara A."/>
            <person name="Oudega B."/>
            <person name="Park S.-H."/>
            <person name="Parro V."/>
            <person name="Pohl T.M."/>
            <person name="Portetelle D."/>
            <person name="Porwollik S."/>
            <person name="Prescott A.M."/>
            <person name="Presecan E."/>
            <person name="Pujic P."/>
            <person name="Purnelle B."/>
            <person name="Rapoport G."/>
            <person name="Rey M."/>
            <person name="Reynolds S."/>
            <person name="Rieger M."/>
            <person name="Rivolta C."/>
            <person name="Rocha E."/>
            <person name="Roche B."/>
            <person name="Rose M."/>
            <person name="Sadaie Y."/>
            <person name="Sato T."/>
            <person name="Scanlan E."/>
            <person name="Schleich S."/>
            <person name="Schroeter R."/>
            <person name="Scoffone F."/>
            <person name="Sekiguchi J."/>
            <person name="Sekowska A."/>
            <person name="Seror S.J."/>
            <person name="Serror P."/>
            <person name="Shin B.-S."/>
            <person name="Soldo B."/>
            <person name="Sorokin A."/>
            <person name="Tacconi E."/>
            <person name="Takagi T."/>
            <person name="Takahashi H."/>
            <person name="Takemaru K."/>
            <person name="Takeuchi M."/>
            <person name="Tamakoshi A."/>
            <person name="Tanaka T."/>
            <person name="Terpstra P."/>
            <person name="Tognoni A."/>
            <person name="Tosato V."/>
            <person name="Uchiyama S."/>
            <person name="Vandenbol M."/>
            <person name="Vannier F."/>
            <person name="Vassarotti A."/>
            <person name="Viari A."/>
            <person name="Wambutt R."/>
            <person name="Wedler E."/>
            <person name="Wedler H."/>
            <person name="Weitzenegger T."/>
            <person name="Winters P."/>
            <person name="Wipat A."/>
            <person name="Yamamoto H."/>
            <person name="Yamane K."/>
            <person name="Yasumoto K."/>
            <person name="Yata K."/>
            <person name="Yoshida K."/>
            <person name="Yoshikawa H.-F."/>
            <person name="Zumstein E."/>
            <person name="Yoshikawa H."/>
            <person name="Danchin A."/>
        </authorList>
    </citation>
    <scope>NUCLEOTIDE SEQUENCE [LARGE SCALE GENOMIC DNA]</scope>
    <source>
        <strain>168</strain>
    </source>
</reference>
<evidence type="ECO:0000305" key="1"/>
<dbReference type="EC" id="1.1.1.-"/>
<dbReference type="EMBL" id="Z93934">
    <property type="protein sequence ID" value="CAB07923.1"/>
    <property type="molecule type" value="Genomic_DNA"/>
</dbReference>
<dbReference type="EMBL" id="AL009126">
    <property type="protein sequence ID" value="CAB15125.1"/>
    <property type="molecule type" value="Genomic_DNA"/>
</dbReference>
<dbReference type="PIR" id="B70011">
    <property type="entry name" value="B70011"/>
</dbReference>
<dbReference type="RefSeq" id="WP_003228872.1">
    <property type="nucleotide sequence ID" value="NZ_OZ025638.1"/>
</dbReference>
<dbReference type="SMR" id="O05240"/>
<dbReference type="FunCoup" id="O05240">
    <property type="interactions" value="137"/>
</dbReference>
<dbReference type="STRING" id="224308.BSU31360"/>
<dbReference type="PaxDb" id="224308-BSU31360"/>
<dbReference type="EnsemblBacteria" id="CAB15125">
    <property type="protein sequence ID" value="CAB15125"/>
    <property type="gene ID" value="BSU_31360"/>
</dbReference>
<dbReference type="GeneID" id="938844"/>
<dbReference type="KEGG" id="bsu:BSU31360"/>
<dbReference type="PATRIC" id="fig|224308.179.peg.3400"/>
<dbReference type="eggNOG" id="COG1979">
    <property type="taxonomic scope" value="Bacteria"/>
</dbReference>
<dbReference type="InParanoid" id="O05240"/>
<dbReference type="OrthoDB" id="9801156at2"/>
<dbReference type="PhylomeDB" id="O05240"/>
<dbReference type="BioCyc" id="BSUB:BSU31360-MONOMER"/>
<dbReference type="UniPathway" id="UPA00743"/>
<dbReference type="Proteomes" id="UP000001570">
    <property type="component" value="Chromosome"/>
</dbReference>
<dbReference type="GO" id="GO:0005829">
    <property type="term" value="C:cytosol"/>
    <property type="evidence" value="ECO:0000318"/>
    <property type="project" value="GO_Central"/>
</dbReference>
<dbReference type="GO" id="GO:0008106">
    <property type="term" value="F:alcohol dehydrogenase (NADP+) activity"/>
    <property type="evidence" value="ECO:0000318"/>
    <property type="project" value="GO_Central"/>
</dbReference>
<dbReference type="GO" id="GO:1990362">
    <property type="term" value="F:butanol dehydrogenase (NAD+) activity"/>
    <property type="evidence" value="ECO:0007669"/>
    <property type="project" value="InterPro"/>
</dbReference>
<dbReference type="GO" id="GO:0046872">
    <property type="term" value="F:metal ion binding"/>
    <property type="evidence" value="ECO:0007669"/>
    <property type="project" value="InterPro"/>
</dbReference>
<dbReference type="GO" id="GO:1990002">
    <property type="term" value="F:methylglyoxal reductase (NADPH) (acetol producing) activity"/>
    <property type="evidence" value="ECO:0000318"/>
    <property type="project" value="GO_Central"/>
</dbReference>
<dbReference type="GO" id="GO:0071271">
    <property type="term" value="P:1-butanol biosynthetic process"/>
    <property type="evidence" value="ECO:0007669"/>
    <property type="project" value="UniProtKB-UniPathway"/>
</dbReference>
<dbReference type="CDD" id="cd08187">
    <property type="entry name" value="BDH"/>
    <property type="match status" value="1"/>
</dbReference>
<dbReference type="FunFam" id="3.40.50.1970:FF:000003">
    <property type="entry name" value="Alcohol dehydrogenase, iron-containing"/>
    <property type="match status" value="1"/>
</dbReference>
<dbReference type="FunFam" id="1.20.1090.10:FF:000009">
    <property type="entry name" value="NADH-dependent butanol dehydrogenase"/>
    <property type="match status" value="1"/>
</dbReference>
<dbReference type="Gene3D" id="3.40.50.1970">
    <property type="match status" value="1"/>
</dbReference>
<dbReference type="Gene3D" id="1.20.1090.10">
    <property type="entry name" value="Dehydroquinate synthase-like - alpha domain"/>
    <property type="match status" value="1"/>
</dbReference>
<dbReference type="InterPro" id="IPR001670">
    <property type="entry name" value="ADH_Fe/GldA"/>
</dbReference>
<dbReference type="InterPro" id="IPR056798">
    <property type="entry name" value="ADH_Fe_C"/>
</dbReference>
<dbReference type="InterPro" id="IPR018211">
    <property type="entry name" value="ADH_Fe_CS"/>
</dbReference>
<dbReference type="InterPro" id="IPR044731">
    <property type="entry name" value="BDH-like"/>
</dbReference>
<dbReference type="PANTHER" id="PTHR43633">
    <property type="entry name" value="ALCOHOL DEHYDROGENASE YQHD"/>
    <property type="match status" value="1"/>
</dbReference>
<dbReference type="PANTHER" id="PTHR43633:SF1">
    <property type="entry name" value="ALCOHOL DEHYDROGENASE YQHD"/>
    <property type="match status" value="1"/>
</dbReference>
<dbReference type="Pfam" id="PF25137">
    <property type="entry name" value="ADH_Fe_C"/>
    <property type="match status" value="1"/>
</dbReference>
<dbReference type="Pfam" id="PF00465">
    <property type="entry name" value="Fe-ADH"/>
    <property type="match status" value="1"/>
</dbReference>
<dbReference type="SUPFAM" id="SSF56796">
    <property type="entry name" value="Dehydroquinate synthase-like"/>
    <property type="match status" value="1"/>
</dbReference>
<dbReference type="PROSITE" id="PS00913">
    <property type="entry name" value="ADH_IRON_1"/>
    <property type="match status" value="1"/>
</dbReference>
<dbReference type="PROSITE" id="PS00060">
    <property type="entry name" value="ADH_IRON_2"/>
    <property type="match status" value="1"/>
</dbReference>
<name>YUGK_BACSU</name>